<evidence type="ECO:0000255" key="1">
    <source>
        <dbReference type="HAMAP-Rule" id="MF_00368"/>
    </source>
</evidence>
<evidence type="ECO:0000305" key="2"/>
<comment type="function">
    <text evidence="1">Forms part of the ribosomal stalk which helps the ribosome interact with GTP-bound translation factors. Is thus essential for accurate translation.</text>
</comment>
<comment type="subunit">
    <text evidence="1">Homodimer. Part of the ribosomal stalk of the 50S ribosomal subunit. Forms a multimeric L10(L12)X complex, where L10 forms an elongated spine to which 2 to 4 L12 dimers bind in a sequential fashion. Binds GTP-bound translation factors.</text>
</comment>
<comment type="similarity">
    <text evidence="1">Belongs to the bacterial ribosomal protein bL12 family.</text>
</comment>
<sequence>MAKLSNDELIEAFKELTLIELSDFVKKFEEVFEVTAAAPVAAAAAPGAAAPAEEVEEKTAFDVILEAAGDKKIQVIKEVRALTSLGLGEAKALVDGAPKAVLEGANKEAADKAKAQLEAAGATVTVK</sequence>
<organism>
    <name type="scientific">Clavibacter sepedonicus</name>
    <name type="common">Clavibacter michiganensis subsp. sepedonicus</name>
    <dbReference type="NCBI Taxonomy" id="31964"/>
    <lineage>
        <taxon>Bacteria</taxon>
        <taxon>Bacillati</taxon>
        <taxon>Actinomycetota</taxon>
        <taxon>Actinomycetes</taxon>
        <taxon>Micrococcales</taxon>
        <taxon>Microbacteriaceae</taxon>
        <taxon>Clavibacter</taxon>
    </lineage>
</organism>
<name>RL7_CLASE</name>
<gene>
    <name evidence="1" type="primary">rplL</name>
    <name type="ordered locus">CMS0116</name>
</gene>
<keyword id="KW-0687">Ribonucleoprotein</keyword>
<keyword id="KW-0689">Ribosomal protein</keyword>
<dbReference type="EMBL" id="AM849034">
    <property type="protein sequence ID" value="CAQ00240.1"/>
    <property type="molecule type" value="Genomic_DNA"/>
</dbReference>
<dbReference type="RefSeq" id="WP_012037546.1">
    <property type="nucleotide sequence ID" value="NZ_MZMN01000003.1"/>
</dbReference>
<dbReference type="SMR" id="B0RIC6"/>
<dbReference type="STRING" id="31964.CMS0116"/>
<dbReference type="GeneID" id="92949904"/>
<dbReference type="KEGG" id="cms:CMS0116"/>
<dbReference type="eggNOG" id="COG0222">
    <property type="taxonomic scope" value="Bacteria"/>
</dbReference>
<dbReference type="HOGENOM" id="CLU_086499_3_0_11"/>
<dbReference type="OrthoDB" id="9811748at2"/>
<dbReference type="Proteomes" id="UP000001318">
    <property type="component" value="Chromosome"/>
</dbReference>
<dbReference type="GO" id="GO:0022625">
    <property type="term" value="C:cytosolic large ribosomal subunit"/>
    <property type="evidence" value="ECO:0007669"/>
    <property type="project" value="TreeGrafter"/>
</dbReference>
<dbReference type="GO" id="GO:0003729">
    <property type="term" value="F:mRNA binding"/>
    <property type="evidence" value="ECO:0007669"/>
    <property type="project" value="TreeGrafter"/>
</dbReference>
<dbReference type="GO" id="GO:0003735">
    <property type="term" value="F:structural constituent of ribosome"/>
    <property type="evidence" value="ECO:0007669"/>
    <property type="project" value="InterPro"/>
</dbReference>
<dbReference type="GO" id="GO:0006412">
    <property type="term" value="P:translation"/>
    <property type="evidence" value="ECO:0007669"/>
    <property type="project" value="UniProtKB-UniRule"/>
</dbReference>
<dbReference type="CDD" id="cd00387">
    <property type="entry name" value="Ribosomal_L7_L12"/>
    <property type="match status" value="1"/>
</dbReference>
<dbReference type="FunFam" id="3.30.1390.10:FF:000001">
    <property type="entry name" value="50S ribosomal protein L7/L12"/>
    <property type="match status" value="1"/>
</dbReference>
<dbReference type="Gene3D" id="3.30.1390.10">
    <property type="match status" value="1"/>
</dbReference>
<dbReference type="Gene3D" id="1.20.5.710">
    <property type="entry name" value="Single helix bin"/>
    <property type="match status" value="1"/>
</dbReference>
<dbReference type="HAMAP" id="MF_00368">
    <property type="entry name" value="Ribosomal_bL12"/>
    <property type="match status" value="1"/>
</dbReference>
<dbReference type="InterPro" id="IPR000206">
    <property type="entry name" value="Ribosomal_bL12"/>
</dbReference>
<dbReference type="InterPro" id="IPR013823">
    <property type="entry name" value="Ribosomal_bL12_C"/>
</dbReference>
<dbReference type="InterPro" id="IPR014719">
    <property type="entry name" value="Ribosomal_bL12_C/ClpS-like"/>
</dbReference>
<dbReference type="InterPro" id="IPR008932">
    <property type="entry name" value="Ribosomal_bL12_oligo"/>
</dbReference>
<dbReference type="InterPro" id="IPR036235">
    <property type="entry name" value="Ribosomal_bL12_oligo_N_sf"/>
</dbReference>
<dbReference type="NCBIfam" id="TIGR00855">
    <property type="entry name" value="L12"/>
    <property type="match status" value="1"/>
</dbReference>
<dbReference type="PANTHER" id="PTHR45987">
    <property type="entry name" value="39S RIBOSOMAL PROTEIN L12"/>
    <property type="match status" value="1"/>
</dbReference>
<dbReference type="PANTHER" id="PTHR45987:SF4">
    <property type="entry name" value="LARGE RIBOSOMAL SUBUNIT PROTEIN BL12M"/>
    <property type="match status" value="1"/>
</dbReference>
<dbReference type="Pfam" id="PF00542">
    <property type="entry name" value="Ribosomal_L12"/>
    <property type="match status" value="1"/>
</dbReference>
<dbReference type="Pfam" id="PF16320">
    <property type="entry name" value="Ribosomal_L12_N"/>
    <property type="match status" value="1"/>
</dbReference>
<dbReference type="SUPFAM" id="SSF54736">
    <property type="entry name" value="ClpS-like"/>
    <property type="match status" value="1"/>
</dbReference>
<dbReference type="SUPFAM" id="SSF48300">
    <property type="entry name" value="Ribosomal protein L7/12, oligomerisation (N-terminal) domain"/>
    <property type="match status" value="1"/>
</dbReference>
<accession>B0RIC6</accession>
<reference key="1">
    <citation type="journal article" date="2008" name="J. Bacteriol.">
        <title>Genome of the actinomycete plant pathogen Clavibacter michiganensis subsp. sepedonicus suggests recent niche adaptation.</title>
        <authorList>
            <person name="Bentley S.D."/>
            <person name="Corton C."/>
            <person name="Brown S.E."/>
            <person name="Barron A."/>
            <person name="Clark L."/>
            <person name="Doggett J."/>
            <person name="Harris B."/>
            <person name="Ormond D."/>
            <person name="Quail M.A."/>
            <person name="May G."/>
            <person name="Francis D."/>
            <person name="Knudson D."/>
            <person name="Parkhill J."/>
            <person name="Ishimaru C.A."/>
        </authorList>
    </citation>
    <scope>NUCLEOTIDE SEQUENCE [LARGE SCALE GENOMIC DNA]</scope>
    <source>
        <strain>ATCC 33113 / DSM 20744 / JCM 9667 / LMG 2889 / ICMP 2535 / C-1</strain>
    </source>
</reference>
<proteinExistence type="inferred from homology"/>
<protein>
    <recommendedName>
        <fullName evidence="1">Large ribosomal subunit protein bL12</fullName>
    </recommendedName>
    <alternativeName>
        <fullName evidence="2">50S ribosomal protein L7/L12</fullName>
    </alternativeName>
</protein>
<feature type="chain" id="PRO_1000079786" description="Large ribosomal subunit protein bL12">
    <location>
        <begin position="1"/>
        <end position="127"/>
    </location>
</feature>